<reference key="1">
    <citation type="journal article" date="2007" name="PLoS Genet.">
        <title>Patterns and implications of gene gain and loss in the evolution of Prochlorococcus.</title>
        <authorList>
            <person name="Kettler G.C."/>
            <person name="Martiny A.C."/>
            <person name="Huang K."/>
            <person name="Zucker J."/>
            <person name="Coleman M.L."/>
            <person name="Rodrigue S."/>
            <person name="Chen F."/>
            <person name="Lapidus A."/>
            <person name="Ferriera S."/>
            <person name="Johnson J."/>
            <person name="Steglich C."/>
            <person name="Church G.M."/>
            <person name="Richardson P."/>
            <person name="Chisholm S.W."/>
        </authorList>
    </citation>
    <scope>NUCLEOTIDE SEQUENCE [LARGE SCALE GENOMIC DNA]</scope>
    <source>
        <strain>NATL1A</strain>
    </source>
</reference>
<proteinExistence type="inferred from homology"/>
<protein>
    <recommendedName>
        <fullName evidence="1">GTPase Obg</fullName>
        <ecNumber evidence="1">3.6.5.-</ecNumber>
    </recommendedName>
    <alternativeName>
        <fullName evidence="1">GTP-binding protein Obg</fullName>
    </alternativeName>
</protein>
<organism>
    <name type="scientific">Prochlorococcus marinus (strain NATL1A)</name>
    <dbReference type="NCBI Taxonomy" id="167555"/>
    <lineage>
        <taxon>Bacteria</taxon>
        <taxon>Bacillati</taxon>
        <taxon>Cyanobacteriota</taxon>
        <taxon>Cyanophyceae</taxon>
        <taxon>Synechococcales</taxon>
        <taxon>Prochlorococcaceae</taxon>
        <taxon>Prochlorococcus</taxon>
    </lineage>
</organism>
<name>OBG_PROM1</name>
<feature type="chain" id="PRO_0000386140" description="GTPase Obg">
    <location>
        <begin position="1"/>
        <end position="329"/>
    </location>
</feature>
<feature type="domain" description="Obg" evidence="2">
    <location>
        <begin position="1"/>
        <end position="159"/>
    </location>
</feature>
<feature type="domain" description="OBG-type G" evidence="1">
    <location>
        <begin position="160"/>
        <end position="328"/>
    </location>
</feature>
<feature type="binding site" evidence="1">
    <location>
        <begin position="166"/>
        <end position="173"/>
    </location>
    <ligand>
        <name>ATP</name>
        <dbReference type="ChEBI" id="CHEBI:30616"/>
    </ligand>
</feature>
<feature type="binding site" evidence="1">
    <location>
        <position position="173"/>
    </location>
    <ligand>
        <name>Mg(2+)</name>
        <dbReference type="ChEBI" id="CHEBI:18420"/>
    </ligand>
</feature>
<feature type="binding site" evidence="1">
    <location>
        <begin position="191"/>
        <end position="195"/>
    </location>
    <ligand>
        <name>ATP</name>
        <dbReference type="ChEBI" id="CHEBI:30616"/>
    </ligand>
</feature>
<feature type="binding site" evidence="1">
    <location>
        <position position="193"/>
    </location>
    <ligand>
        <name>Mg(2+)</name>
        <dbReference type="ChEBI" id="CHEBI:18420"/>
    </ligand>
</feature>
<feature type="binding site" evidence="1">
    <location>
        <begin position="213"/>
        <end position="216"/>
    </location>
    <ligand>
        <name>ATP</name>
        <dbReference type="ChEBI" id="CHEBI:30616"/>
    </ligand>
</feature>
<feature type="binding site" evidence="1">
    <location>
        <begin position="280"/>
        <end position="283"/>
    </location>
    <ligand>
        <name>ATP</name>
        <dbReference type="ChEBI" id="CHEBI:30616"/>
    </ligand>
</feature>
<feature type="binding site" evidence="1">
    <location>
        <begin position="309"/>
        <end position="311"/>
    </location>
    <ligand>
        <name>ATP</name>
        <dbReference type="ChEBI" id="CHEBI:30616"/>
    </ligand>
</feature>
<gene>
    <name evidence="1" type="primary">obg</name>
    <name type="ordered locus">NATL1_02961</name>
</gene>
<sequence length="329" mass="35346">MQFIDQAIIDVKAGSGGDGISAFRREKYVPAGGPAGGDGGQGGNVVLEADDNLQTLLDFKFQKLISAENGQRGGPNKCTGASGKDTVLKVPCGTEVRHLSTNIILGDLTNKGQQLIVAFGGKGGFGNARYLSNSNRAPEKFTEGKVGEEWSLQLELKLLAEVGIIGLPNAGKSTLISVLSSARPKIADYPFTTLIPNLGVVRRPSGDGTVFADIPGLISGASKGIGLGHDFLRHIERTKVLLHLIDSASTDPINDFKTINEELTSYGHGLISRPRIFVLNKKELLNEHEIKKLLNKIEKLTMKKVHIISAVTKFGLDDLLSSIWYELGY</sequence>
<comment type="function">
    <text evidence="1">An essential GTPase which binds GTP, GDP and possibly (p)ppGpp with moderate affinity, with high nucleotide exchange rates and a fairly low GTP hydrolysis rate. Plays a role in control of the cell cycle, stress response, ribosome biogenesis and in those bacteria that undergo differentiation, in morphogenesis control.</text>
</comment>
<comment type="cofactor">
    <cofactor evidence="1">
        <name>Mg(2+)</name>
        <dbReference type="ChEBI" id="CHEBI:18420"/>
    </cofactor>
</comment>
<comment type="subunit">
    <text evidence="1">Monomer.</text>
</comment>
<comment type="subcellular location">
    <subcellularLocation>
        <location evidence="1">Cytoplasm</location>
    </subcellularLocation>
</comment>
<comment type="similarity">
    <text evidence="1">Belongs to the TRAFAC class OBG-HflX-like GTPase superfamily. OBG GTPase family.</text>
</comment>
<accession>A2C050</accession>
<keyword id="KW-0067">ATP-binding</keyword>
<keyword id="KW-0963">Cytoplasm</keyword>
<keyword id="KW-0342">GTP-binding</keyword>
<keyword id="KW-0378">Hydrolase</keyword>
<keyword id="KW-0460">Magnesium</keyword>
<keyword id="KW-0479">Metal-binding</keyword>
<keyword id="KW-0547">Nucleotide-binding</keyword>
<dbReference type="EC" id="3.6.5.-" evidence="1"/>
<dbReference type="EMBL" id="CP000553">
    <property type="protein sequence ID" value="ABM74860.1"/>
    <property type="molecule type" value="Genomic_DNA"/>
</dbReference>
<dbReference type="RefSeq" id="WP_011823074.1">
    <property type="nucleotide sequence ID" value="NC_008819.1"/>
</dbReference>
<dbReference type="SMR" id="A2C050"/>
<dbReference type="KEGG" id="pme:NATL1_02961"/>
<dbReference type="eggNOG" id="COG0536">
    <property type="taxonomic scope" value="Bacteria"/>
</dbReference>
<dbReference type="HOGENOM" id="CLU_011747_2_3_3"/>
<dbReference type="Proteomes" id="UP000002592">
    <property type="component" value="Chromosome"/>
</dbReference>
<dbReference type="GO" id="GO:0005737">
    <property type="term" value="C:cytoplasm"/>
    <property type="evidence" value="ECO:0007669"/>
    <property type="project" value="UniProtKB-SubCell"/>
</dbReference>
<dbReference type="GO" id="GO:0005524">
    <property type="term" value="F:ATP binding"/>
    <property type="evidence" value="ECO:0007669"/>
    <property type="project" value="UniProtKB-KW"/>
</dbReference>
<dbReference type="GO" id="GO:0005525">
    <property type="term" value="F:GTP binding"/>
    <property type="evidence" value="ECO:0007669"/>
    <property type="project" value="UniProtKB-UniRule"/>
</dbReference>
<dbReference type="GO" id="GO:0003924">
    <property type="term" value="F:GTPase activity"/>
    <property type="evidence" value="ECO:0007669"/>
    <property type="project" value="UniProtKB-UniRule"/>
</dbReference>
<dbReference type="GO" id="GO:0000287">
    <property type="term" value="F:magnesium ion binding"/>
    <property type="evidence" value="ECO:0007669"/>
    <property type="project" value="InterPro"/>
</dbReference>
<dbReference type="GO" id="GO:0042254">
    <property type="term" value="P:ribosome biogenesis"/>
    <property type="evidence" value="ECO:0007669"/>
    <property type="project" value="UniProtKB-UniRule"/>
</dbReference>
<dbReference type="CDD" id="cd01898">
    <property type="entry name" value="Obg"/>
    <property type="match status" value="1"/>
</dbReference>
<dbReference type="FunFam" id="2.70.210.12:FF:000001">
    <property type="entry name" value="GTPase Obg"/>
    <property type="match status" value="1"/>
</dbReference>
<dbReference type="Gene3D" id="2.70.210.12">
    <property type="entry name" value="GTP1/OBG domain"/>
    <property type="match status" value="1"/>
</dbReference>
<dbReference type="Gene3D" id="3.40.50.300">
    <property type="entry name" value="P-loop containing nucleotide triphosphate hydrolases"/>
    <property type="match status" value="1"/>
</dbReference>
<dbReference type="HAMAP" id="MF_01454">
    <property type="entry name" value="GTPase_Obg"/>
    <property type="match status" value="1"/>
</dbReference>
<dbReference type="InterPro" id="IPR031167">
    <property type="entry name" value="G_OBG"/>
</dbReference>
<dbReference type="InterPro" id="IPR006073">
    <property type="entry name" value="GTP-bd"/>
</dbReference>
<dbReference type="InterPro" id="IPR014100">
    <property type="entry name" value="GTP-bd_Obg/CgtA"/>
</dbReference>
<dbReference type="InterPro" id="IPR006169">
    <property type="entry name" value="GTP1_OBG_dom"/>
</dbReference>
<dbReference type="InterPro" id="IPR036726">
    <property type="entry name" value="GTP1_OBG_dom_sf"/>
</dbReference>
<dbReference type="InterPro" id="IPR045086">
    <property type="entry name" value="OBG_GTPase"/>
</dbReference>
<dbReference type="InterPro" id="IPR027417">
    <property type="entry name" value="P-loop_NTPase"/>
</dbReference>
<dbReference type="NCBIfam" id="TIGR02729">
    <property type="entry name" value="Obg_CgtA"/>
    <property type="match status" value="1"/>
</dbReference>
<dbReference type="NCBIfam" id="NF008955">
    <property type="entry name" value="PRK12297.1"/>
    <property type="match status" value="1"/>
</dbReference>
<dbReference type="NCBIfam" id="NF008956">
    <property type="entry name" value="PRK12299.1"/>
    <property type="match status" value="1"/>
</dbReference>
<dbReference type="PANTHER" id="PTHR11702">
    <property type="entry name" value="DEVELOPMENTALLY REGULATED GTP-BINDING PROTEIN-RELATED"/>
    <property type="match status" value="1"/>
</dbReference>
<dbReference type="PANTHER" id="PTHR11702:SF31">
    <property type="entry name" value="MITOCHONDRIAL RIBOSOME-ASSOCIATED GTPASE 2"/>
    <property type="match status" value="1"/>
</dbReference>
<dbReference type="Pfam" id="PF01018">
    <property type="entry name" value="GTP1_OBG"/>
    <property type="match status" value="1"/>
</dbReference>
<dbReference type="Pfam" id="PF01926">
    <property type="entry name" value="MMR_HSR1"/>
    <property type="match status" value="1"/>
</dbReference>
<dbReference type="PIRSF" id="PIRSF002401">
    <property type="entry name" value="GTP_bd_Obg/CgtA"/>
    <property type="match status" value="1"/>
</dbReference>
<dbReference type="PRINTS" id="PR00326">
    <property type="entry name" value="GTP1OBG"/>
</dbReference>
<dbReference type="SUPFAM" id="SSF82051">
    <property type="entry name" value="Obg GTP-binding protein N-terminal domain"/>
    <property type="match status" value="1"/>
</dbReference>
<dbReference type="SUPFAM" id="SSF52540">
    <property type="entry name" value="P-loop containing nucleoside triphosphate hydrolases"/>
    <property type="match status" value="1"/>
</dbReference>
<dbReference type="PROSITE" id="PS51710">
    <property type="entry name" value="G_OBG"/>
    <property type="match status" value="1"/>
</dbReference>
<dbReference type="PROSITE" id="PS51883">
    <property type="entry name" value="OBG"/>
    <property type="match status" value="1"/>
</dbReference>
<evidence type="ECO:0000255" key="1">
    <source>
        <dbReference type="HAMAP-Rule" id="MF_01454"/>
    </source>
</evidence>
<evidence type="ECO:0000255" key="2">
    <source>
        <dbReference type="PROSITE-ProRule" id="PRU01231"/>
    </source>
</evidence>